<proteinExistence type="inferred from homology"/>
<gene>
    <name evidence="1" type="primary">pnp</name>
    <name type="ordered locus">Xaut_0288</name>
</gene>
<organism>
    <name type="scientific">Xanthobacter autotrophicus (strain ATCC BAA-1158 / Py2)</name>
    <dbReference type="NCBI Taxonomy" id="78245"/>
    <lineage>
        <taxon>Bacteria</taxon>
        <taxon>Pseudomonadati</taxon>
        <taxon>Pseudomonadota</taxon>
        <taxon>Alphaproteobacteria</taxon>
        <taxon>Hyphomicrobiales</taxon>
        <taxon>Xanthobacteraceae</taxon>
        <taxon>Xanthobacter</taxon>
    </lineage>
</organism>
<reference key="1">
    <citation type="submission" date="2007-07" db="EMBL/GenBank/DDBJ databases">
        <title>Complete sequence of chromosome of Xanthobacter autotrophicus Py2.</title>
        <authorList>
            <consortium name="US DOE Joint Genome Institute"/>
            <person name="Copeland A."/>
            <person name="Lucas S."/>
            <person name="Lapidus A."/>
            <person name="Barry K."/>
            <person name="Glavina del Rio T."/>
            <person name="Hammon N."/>
            <person name="Israni S."/>
            <person name="Dalin E."/>
            <person name="Tice H."/>
            <person name="Pitluck S."/>
            <person name="Sims D."/>
            <person name="Brettin T."/>
            <person name="Bruce D."/>
            <person name="Detter J.C."/>
            <person name="Han C."/>
            <person name="Tapia R."/>
            <person name="Brainard J."/>
            <person name="Schmutz J."/>
            <person name="Larimer F."/>
            <person name="Land M."/>
            <person name="Hauser L."/>
            <person name="Kyrpides N."/>
            <person name="Kim E."/>
            <person name="Ensigns S.A."/>
            <person name="Richardson P."/>
        </authorList>
    </citation>
    <scope>NUCLEOTIDE SEQUENCE [LARGE SCALE GENOMIC DNA]</scope>
    <source>
        <strain>ATCC BAA-1158 / Py2</strain>
    </source>
</reference>
<comment type="function">
    <text evidence="1">Involved in mRNA degradation. Catalyzes the phosphorolysis of single-stranded polyribonucleotides processively in the 3'- to 5'-direction.</text>
</comment>
<comment type="catalytic activity">
    <reaction evidence="1">
        <text>RNA(n+1) + phosphate = RNA(n) + a ribonucleoside 5'-diphosphate</text>
        <dbReference type="Rhea" id="RHEA:22096"/>
        <dbReference type="Rhea" id="RHEA-COMP:14527"/>
        <dbReference type="Rhea" id="RHEA-COMP:17342"/>
        <dbReference type="ChEBI" id="CHEBI:43474"/>
        <dbReference type="ChEBI" id="CHEBI:57930"/>
        <dbReference type="ChEBI" id="CHEBI:140395"/>
        <dbReference type="EC" id="2.7.7.8"/>
    </reaction>
</comment>
<comment type="cofactor">
    <cofactor evidence="1">
        <name>Mg(2+)</name>
        <dbReference type="ChEBI" id="CHEBI:18420"/>
    </cofactor>
</comment>
<comment type="subcellular location">
    <subcellularLocation>
        <location evidence="1">Cytoplasm</location>
    </subcellularLocation>
</comment>
<comment type="similarity">
    <text evidence="1">Belongs to the polyribonucleotide nucleotidyltransferase family.</text>
</comment>
<keyword id="KW-0963">Cytoplasm</keyword>
<keyword id="KW-0460">Magnesium</keyword>
<keyword id="KW-0479">Metal-binding</keyword>
<keyword id="KW-0548">Nucleotidyltransferase</keyword>
<keyword id="KW-1185">Reference proteome</keyword>
<keyword id="KW-0694">RNA-binding</keyword>
<keyword id="KW-0808">Transferase</keyword>
<feature type="chain" id="PRO_1000192506" description="Polyribonucleotide nucleotidyltransferase">
    <location>
        <begin position="1"/>
        <end position="730"/>
    </location>
</feature>
<feature type="domain" description="KH" evidence="1">
    <location>
        <begin position="556"/>
        <end position="615"/>
    </location>
</feature>
<feature type="domain" description="S1 motif" evidence="1">
    <location>
        <begin position="625"/>
        <end position="693"/>
    </location>
</feature>
<feature type="region of interest" description="Disordered" evidence="2">
    <location>
        <begin position="700"/>
        <end position="730"/>
    </location>
</feature>
<feature type="compositionally biased region" description="Basic and acidic residues" evidence="2">
    <location>
        <begin position="703"/>
        <end position="714"/>
    </location>
</feature>
<feature type="compositionally biased region" description="Low complexity" evidence="2">
    <location>
        <begin position="715"/>
        <end position="730"/>
    </location>
</feature>
<feature type="binding site" evidence="1">
    <location>
        <position position="489"/>
    </location>
    <ligand>
        <name>Mg(2+)</name>
        <dbReference type="ChEBI" id="CHEBI:18420"/>
    </ligand>
</feature>
<feature type="binding site" evidence="1">
    <location>
        <position position="495"/>
    </location>
    <ligand>
        <name>Mg(2+)</name>
        <dbReference type="ChEBI" id="CHEBI:18420"/>
    </ligand>
</feature>
<name>PNP_XANP2</name>
<dbReference type="EC" id="2.7.7.8" evidence="1"/>
<dbReference type="EMBL" id="CP000781">
    <property type="protein sequence ID" value="ABS65546.1"/>
    <property type="molecule type" value="Genomic_DNA"/>
</dbReference>
<dbReference type="SMR" id="A7IC03"/>
<dbReference type="STRING" id="78245.Xaut_0288"/>
<dbReference type="KEGG" id="xau:Xaut_0288"/>
<dbReference type="eggNOG" id="COG1185">
    <property type="taxonomic scope" value="Bacteria"/>
</dbReference>
<dbReference type="HOGENOM" id="CLU_004217_2_2_5"/>
<dbReference type="OrthoDB" id="9804305at2"/>
<dbReference type="PhylomeDB" id="A7IC03"/>
<dbReference type="Proteomes" id="UP000002417">
    <property type="component" value="Chromosome"/>
</dbReference>
<dbReference type="GO" id="GO:0005829">
    <property type="term" value="C:cytosol"/>
    <property type="evidence" value="ECO:0007669"/>
    <property type="project" value="TreeGrafter"/>
</dbReference>
<dbReference type="GO" id="GO:0000175">
    <property type="term" value="F:3'-5'-RNA exonuclease activity"/>
    <property type="evidence" value="ECO:0007669"/>
    <property type="project" value="TreeGrafter"/>
</dbReference>
<dbReference type="GO" id="GO:0000287">
    <property type="term" value="F:magnesium ion binding"/>
    <property type="evidence" value="ECO:0007669"/>
    <property type="project" value="UniProtKB-UniRule"/>
</dbReference>
<dbReference type="GO" id="GO:0004654">
    <property type="term" value="F:polyribonucleotide nucleotidyltransferase activity"/>
    <property type="evidence" value="ECO:0007669"/>
    <property type="project" value="UniProtKB-UniRule"/>
</dbReference>
<dbReference type="GO" id="GO:0003723">
    <property type="term" value="F:RNA binding"/>
    <property type="evidence" value="ECO:0007669"/>
    <property type="project" value="UniProtKB-UniRule"/>
</dbReference>
<dbReference type="GO" id="GO:0006402">
    <property type="term" value="P:mRNA catabolic process"/>
    <property type="evidence" value="ECO:0007669"/>
    <property type="project" value="UniProtKB-UniRule"/>
</dbReference>
<dbReference type="GO" id="GO:0006396">
    <property type="term" value="P:RNA processing"/>
    <property type="evidence" value="ECO:0007669"/>
    <property type="project" value="InterPro"/>
</dbReference>
<dbReference type="CDD" id="cd02393">
    <property type="entry name" value="KH-I_PNPase"/>
    <property type="match status" value="1"/>
</dbReference>
<dbReference type="CDD" id="cd11363">
    <property type="entry name" value="RNase_PH_PNPase_1"/>
    <property type="match status" value="1"/>
</dbReference>
<dbReference type="CDD" id="cd11364">
    <property type="entry name" value="RNase_PH_PNPase_2"/>
    <property type="match status" value="1"/>
</dbReference>
<dbReference type="CDD" id="cd04472">
    <property type="entry name" value="S1_PNPase"/>
    <property type="match status" value="1"/>
</dbReference>
<dbReference type="FunFam" id="2.40.50.140:FF:000107">
    <property type="entry name" value="Polyribonucleotide nucleotidyltransferase"/>
    <property type="match status" value="1"/>
</dbReference>
<dbReference type="FunFam" id="3.30.1370.10:FF:000001">
    <property type="entry name" value="Polyribonucleotide nucleotidyltransferase"/>
    <property type="match status" value="1"/>
</dbReference>
<dbReference type="FunFam" id="3.30.230.70:FF:000001">
    <property type="entry name" value="Polyribonucleotide nucleotidyltransferase"/>
    <property type="match status" value="1"/>
</dbReference>
<dbReference type="FunFam" id="3.30.230.70:FF:000002">
    <property type="entry name" value="Polyribonucleotide nucleotidyltransferase"/>
    <property type="match status" value="1"/>
</dbReference>
<dbReference type="Gene3D" id="3.30.230.70">
    <property type="entry name" value="GHMP Kinase, N-terminal domain"/>
    <property type="match status" value="2"/>
</dbReference>
<dbReference type="Gene3D" id="3.30.1370.10">
    <property type="entry name" value="K Homology domain, type 1"/>
    <property type="match status" value="1"/>
</dbReference>
<dbReference type="Gene3D" id="2.40.50.140">
    <property type="entry name" value="Nucleic acid-binding proteins"/>
    <property type="match status" value="1"/>
</dbReference>
<dbReference type="HAMAP" id="MF_01595">
    <property type="entry name" value="PNPase"/>
    <property type="match status" value="1"/>
</dbReference>
<dbReference type="InterPro" id="IPR001247">
    <property type="entry name" value="ExoRNase_PH_dom1"/>
</dbReference>
<dbReference type="InterPro" id="IPR015847">
    <property type="entry name" value="ExoRNase_PH_dom2"/>
</dbReference>
<dbReference type="InterPro" id="IPR036345">
    <property type="entry name" value="ExoRNase_PH_dom2_sf"/>
</dbReference>
<dbReference type="InterPro" id="IPR004087">
    <property type="entry name" value="KH_dom"/>
</dbReference>
<dbReference type="InterPro" id="IPR004088">
    <property type="entry name" value="KH_dom_type_1"/>
</dbReference>
<dbReference type="InterPro" id="IPR036612">
    <property type="entry name" value="KH_dom_type_1_sf"/>
</dbReference>
<dbReference type="InterPro" id="IPR012340">
    <property type="entry name" value="NA-bd_OB-fold"/>
</dbReference>
<dbReference type="InterPro" id="IPR012162">
    <property type="entry name" value="PNPase"/>
</dbReference>
<dbReference type="InterPro" id="IPR027408">
    <property type="entry name" value="PNPase/RNase_PH_dom_sf"/>
</dbReference>
<dbReference type="InterPro" id="IPR015848">
    <property type="entry name" value="PNPase_PH_RNA-bd_bac/org-type"/>
</dbReference>
<dbReference type="InterPro" id="IPR020568">
    <property type="entry name" value="Ribosomal_Su5_D2-typ_SF"/>
</dbReference>
<dbReference type="InterPro" id="IPR003029">
    <property type="entry name" value="S1_domain"/>
</dbReference>
<dbReference type="NCBIfam" id="TIGR03591">
    <property type="entry name" value="polynuc_phos"/>
    <property type="match status" value="1"/>
</dbReference>
<dbReference type="NCBIfam" id="NF008805">
    <property type="entry name" value="PRK11824.1"/>
    <property type="match status" value="1"/>
</dbReference>
<dbReference type="PANTHER" id="PTHR11252">
    <property type="entry name" value="POLYRIBONUCLEOTIDE NUCLEOTIDYLTRANSFERASE"/>
    <property type="match status" value="1"/>
</dbReference>
<dbReference type="PANTHER" id="PTHR11252:SF0">
    <property type="entry name" value="POLYRIBONUCLEOTIDE NUCLEOTIDYLTRANSFERASE 1, MITOCHONDRIAL"/>
    <property type="match status" value="1"/>
</dbReference>
<dbReference type="Pfam" id="PF00013">
    <property type="entry name" value="KH_1"/>
    <property type="match status" value="1"/>
</dbReference>
<dbReference type="Pfam" id="PF03726">
    <property type="entry name" value="PNPase"/>
    <property type="match status" value="1"/>
</dbReference>
<dbReference type="Pfam" id="PF01138">
    <property type="entry name" value="RNase_PH"/>
    <property type="match status" value="2"/>
</dbReference>
<dbReference type="Pfam" id="PF03725">
    <property type="entry name" value="RNase_PH_C"/>
    <property type="match status" value="2"/>
</dbReference>
<dbReference type="Pfam" id="PF00575">
    <property type="entry name" value="S1"/>
    <property type="match status" value="1"/>
</dbReference>
<dbReference type="PIRSF" id="PIRSF005499">
    <property type="entry name" value="PNPase"/>
    <property type="match status" value="1"/>
</dbReference>
<dbReference type="SMART" id="SM00322">
    <property type="entry name" value="KH"/>
    <property type="match status" value="1"/>
</dbReference>
<dbReference type="SMART" id="SM00316">
    <property type="entry name" value="S1"/>
    <property type="match status" value="1"/>
</dbReference>
<dbReference type="SUPFAM" id="SSF54791">
    <property type="entry name" value="Eukaryotic type KH-domain (KH-domain type I)"/>
    <property type="match status" value="1"/>
</dbReference>
<dbReference type="SUPFAM" id="SSF50249">
    <property type="entry name" value="Nucleic acid-binding proteins"/>
    <property type="match status" value="1"/>
</dbReference>
<dbReference type="SUPFAM" id="SSF55666">
    <property type="entry name" value="Ribonuclease PH domain 2-like"/>
    <property type="match status" value="2"/>
</dbReference>
<dbReference type="SUPFAM" id="SSF54211">
    <property type="entry name" value="Ribosomal protein S5 domain 2-like"/>
    <property type="match status" value="2"/>
</dbReference>
<dbReference type="PROSITE" id="PS50084">
    <property type="entry name" value="KH_TYPE_1"/>
    <property type="match status" value="1"/>
</dbReference>
<dbReference type="PROSITE" id="PS50126">
    <property type="entry name" value="S1"/>
    <property type="match status" value="1"/>
</dbReference>
<evidence type="ECO:0000255" key="1">
    <source>
        <dbReference type="HAMAP-Rule" id="MF_01595"/>
    </source>
</evidence>
<evidence type="ECO:0000256" key="2">
    <source>
        <dbReference type="SAM" id="MobiDB-lite"/>
    </source>
</evidence>
<sequence length="730" mass="78913">MFDIHREELDWGGRTLTLETGKMARQADGSVLATYGDTKVLATVVSAREPKPGQDFFPLTVNYQEKTYAAGRIPGGYFKREGRPSEKETLVSRLIDRPIRPLFPEGYKCDTQVVITVLAHDLENDPDVVAMVAASAALTLSGVPFMGPVGAARVGFIDNEYVLNPTVDEVKESALELVVAGTGDAVLMVESEAKELPEEIMLGAVMFGHRHFQPVIEAIIKLAEKAAKEPRNFQPADVSEVESKVREIAEADLRAAYKIKQKQDRYAAVGAAKSKVKKYYEELALDGTKVPTAQVVSDVLKALEAKIVRWNILDDGIRIDGRDVYTVRPIVSEVGILPRAHGSALFTRGETQALVVATLGTGEDEQFIDSLEGTYKEHFLLHYNFPPFSVGETGRMGSPGRREIGHGKLAWRAIHPMLPAKHEFPYTLRVVSEILESNGSSSMATVCGTSLALMDAGVPLRRPVAGIAMGLILEGEKFAVLSDILGDEDHLGDMDFKVAGTEQGVTSLQMDIKIAGITEEIMKVALTQAKDGRVHILGEMAKALTTARAELGEHAPRIEVMKIAVDKIREVIGSGGKVIREIVEKTGAKINIEDDGTIKIASASGDAIKAAINWIKSIASEPEVGQIYEGTVVKVVDFGAFVNFFGSKDGLVHVSQMANERVAKPSDVVKEGDKVKVKLMGFDERGKTRLSMKVVDQTTGEDLEAKAKAERDAARAAAPAATGDEAGAAE</sequence>
<accession>A7IC03</accession>
<protein>
    <recommendedName>
        <fullName evidence="1">Polyribonucleotide nucleotidyltransferase</fullName>
        <ecNumber evidence="1">2.7.7.8</ecNumber>
    </recommendedName>
    <alternativeName>
        <fullName evidence="1">Polynucleotide phosphorylase</fullName>
        <shortName evidence="1">PNPase</shortName>
    </alternativeName>
</protein>